<feature type="chain" id="PRO_0000136384" description="Phosphoribosyl-ATP pyrophosphatase 1">
    <location>
        <begin position="1"/>
        <end position="107"/>
    </location>
</feature>
<reference key="1">
    <citation type="journal article" date="2004" name="Nat. Biotechnol.">
        <title>Complete genome sequence of the metabolically versatile photosynthetic bacterium Rhodopseudomonas palustris.</title>
        <authorList>
            <person name="Larimer F.W."/>
            <person name="Chain P."/>
            <person name="Hauser L."/>
            <person name="Lamerdin J.E."/>
            <person name="Malfatti S."/>
            <person name="Do L."/>
            <person name="Land M.L."/>
            <person name="Pelletier D.A."/>
            <person name="Beatty J.T."/>
            <person name="Lang A.S."/>
            <person name="Tabita F.R."/>
            <person name="Gibson J.L."/>
            <person name="Hanson T.E."/>
            <person name="Bobst C."/>
            <person name="Torres y Torres J.L."/>
            <person name="Peres C."/>
            <person name="Harrison F.H."/>
            <person name="Gibson J."/>
            <person name="Harwood C.S."/>
        </authorList>
    </citation>
    <scope>NUCLEOTIDE SEQUENCE [LARGE SCALE GENOMIC DNA]</scope>
    <source>
        <strain>ATCC BAA-98 / CGA009</strain>
    </source>
</reference>
<proteinExistence type="inferred from homology"/>
<sequence>MARFTLHDLAATVDARAASGGESSYTKKLLDKGPEHCAKKFGEEAVEMVIAAVENDRGHLISETADVLFHMLVLLKSRGVKLEEVEAALAQRTSMSGLEEKASRKRD</sequence>
<accession>P60538</accession>
<keyword id="KW-0028">Amino-acid biosynthesis</keyword>
<keyword id="KW-0067">ATP-binding</keyword>
<keyword id="KW-0963">Cytoplasm</keyword>
<keyword id="KW-0368">Histidine biosynthesis</keyword>
<keyword id="KW-0378">Hydrolase</keyword>
<keyword id="KW-0547">Nucleotide-binding</keyword>
<organism>
    <name type="scientific">Rhodopseudomonas palustris (strain ATCC BAA-98 / CGA009)</name>
    <dbReference type="NCBI Taxonomy" id="258594"/>
    <lineage>
        <taxon>Bacteria</taxon>
        <taxon>Pseudomonadati</taxon>
        <taxon>Pseudomonadota</taxon>
        <taxon>Alphaproteobacteria</taxon>
        <taxon>Hyphomicrobiales</taxon>
        <taxon>Nitrobacteraceae</taxon>
        <taxon>Rhodopseudomonas</taxon>
    </lineage>
</organism>
<name>HIS21_RHOPA</name>
<gene>
    <name type="primary">hisE1</name>
    <name type="ordered locus">RPA0314</name>
</gene>
<protein>
    <recommendedName>
        <fullName>Phosphoribosyl-ATP pyrophosphatase 1</fullName>
        <shortName>PRA-PH 1</shortName>
        <ecNumber>3.6.1.31</ecNumber>
    </recommendedName>
</protein>
<dbReference type="EC" id="3.6.1.31"/>
<dbReference type="EMBL" id="BX572593">
    <property type="protein sequence ID" value="CAE25758.1"/>
    <property type="molecule type" value="Genomic_DNA"/>
</dbReference>
<dbReference type="RefSeq" id="WP_011155882.1">
    <property type="nucleotide sequence ID" value="NZ_CP116810.1"/>
</dbReference>
<dbReference type="SMR" id="P60538"/>
<dbReference type="STRING" id="258594.RPA0314"/>
<dbReference type="eggNOG" id="COG0140">
    <property type="taxonomic scope" value="Bacteria"/>
</dbReference>
<dbReference type="HOGENOM" id="CLU_123337_1_1_5"/>
<dbReference type="PhylomeDB" id="P60538"/>
<dbReference type="UniPathway" id="UPA00031">
    <property type="reaction ID" value="UER00007"/>
</dbReference>
<dbReference type="GO" id="GO:0005737">
    <property type="term" value="C:cytoplasm"/>
    <property type="evidence" value="ECO:0007669"/>
    <property type="project" value="UniProtKB-SubCell"/>
</dbReference>
<dbReference type="GO" id="GO:0005524">
    <property type="term" value="F:ATP binding"/>
    <property type="evidence" value="ECO:0007669"/>
    <property type="project" value="UniProtKB-KW"/>
</dbReference>
<dbReference type="GO" id="GO:0004636">
    <property type="term" value="F:phosphoribosyl-ATP diphosphatase activity"/>
    <property type="evidence" value="ECO:0007669"/>
    <property type="project" value="UniProtKB-UniRule"/>
</dbReference>
<dbReference type="GO" id="GO:0000105">
    <property type="term" value="P:L-histidine biosynthetic process"/>
    <property type="evidence" value="ECO:0007669"/>
    <property type="project" value="UniProtKB-UniRule"/>
</dbReference>
<dbReference type="CDD" id="cd11534">
    <property type="entry name" value="NTP-PPase_HisIE_like"/>
    <property type="match status" value="1"/>
</dbReference>
<dbReference type="Gene3D" id="1.10.287.1080">
    <property type="entry name" value="MazG-like"/>
    <property type="match status" value="1"/>
</dbReference>
<dbReference type="HAMAP" id="MF_01020">
    <property type="entry name" value="HisE"/>
    <property type="match status" value="1"/>
</dbReference>
<dbReference type="InterPro" id="IPR008179">
    <property type="entry name" value="HisE"/>
</dbReference>
<dbReference type="InterPro" id="IPR021130">
    <property type="entry name" value="PRib-ATP_PPHydrolase-like"/>
</dbReference>
<dbReference type="NCBIfam" id="TIGR03188">
    <property type="entry name" value="histidine_hisI"/>
    <property type="match status" value="1"/>
</dbReference>
<dbReference type="NCBIfam" id="NF001611">
    <property type="entry name" value="PRK00400.1-3"/>
    <property type="match status" value="1"/>
</dbReference>
<dbReference type="NCBIfam" id="NF001613">
    <property type="entry name" value="PRK00400.1-5"/>
    <property type="match status" value="1"/>
</dbReference>
<dbReference type="PANTHER" id="PTHR42945">
    <property type="entry name" value="HISTIDINE BIOSYNTHESIS BIFUNCTIONAL PROTEIN"/>
    <property type="match status" value="1"/>
</dbReference>
<dbReference type="PANTHER" id="PTHR42945:SF1">
    <property type="entry name" value="HISTIDINE BIOSYNTHESIS BIFUNCTIONAL PROTEIN HIS7"/>
    <property type="match status" value="1"/>
</dbReference>
<dbReference type="Pfam" id="PF01503">
    <property type="entry name" value="PRA-PH"/>
    <property type="match status" value="1"/>
</dbReference>
<dbReference type="SUPFAM" id="SSF101386">
    <property type="entry name" value="all-alpha NTP pyrophosphatases"/>
    <property type="match status" value="1"/>
</dbReference>
<evidence type="ECO:0000250" key="1"/>
<evidence type="ECO:0000305" key="2"/>
<comment type="catalytic activity">
    <reaction>
        <text>1-(5-phospho-beta-D-ribosyl)-ATP + H2O = 1-(5-phospho-beta-D-ribosyl)-5'-AMP + diphosphate + H(+)</text>
        <dbReference type="Rhea" id="RHEA:22828"/>
        <dbReference type="ChEBI" id="CHEBI:15377"/>
        <dbReference type="ChEBI" id="CHEBI:15378"/>
        <dbReference type="ChEBI" id="CHEBI:33019"/>
        <dbReference type="ChEBI" id="CHEBI:59457"/>
        <dbReference type="ChEBI" id="CHEBI:73183"/>
        <dbReference type="EC" id="3.6.1.31"/>
    </reaction>
</comment>
<comment type="pathway">
    <text>Amino-acid biosynthesis; L-histidine biosynthesis; L-histidine from 5-phospho-alpha-D-ribose 1-diphosphate: step 2/9.</text>
</comment>
<comment type="subcellular location">
    <subcellularLocation>
        <location evidence="1">Cytoplasm</location>
    </subcellularLocation>
</comment>
<comment type="similarity">
    <text evidence="2">Belongs to the PRA-PH family.</text>
</comment>